<proteinExistence type="evidence at protein level"/>
<accession>Q2YRG4</accession>
<sequence>MTAASSSAPTLGIIRLEHAKGLDLPAYETAGSAGMDLRAAVAEDRQIVLLPGRRTLVPTGLILEIPQGYEVQIRPRSGLAFKNGITCLNTPGTIDSDYRGEVKVLLINLGDDDFRIERGMRIAQAVFAPVIQPKIEERAKISETARGAGGFGSTGTA</sequence>
<protein>
    <recommendedName>
        <fullName evidence="1">Deoxyuridine 5'-triphosphate nucleotidohydrolase</fullName>
        <shortName evidence="1">dUTPase</shortName>
        <ecNumber evidence="1">3.6.1.23</ecNumber>
    </recommendedName>
    <alternativeName>
        <fullName evidence="1">dUTP pyrophosphatase</fullName>
    </alternativeName>
</protein>
<organism>
    <name type="scientific">Brucella abortus (strain 2308)</name>
    <dbReference type="NCBI Taxonomy" id="359391"/>
    <lineage>
        <taxon>Bacteria</taxon>
        <taxon>Pseudomonadati</taxon>
        <taxon>Pseudomonadota</taxon>
        <taxon>Alphaproteobacteria</taxon>
        <taxon>Hyphomicrobiales</taxon>
        <taxon>Brucellaceae</taxon>
        <taxon>Brucella/Ochrobactrum group</taxon>
        <taxon>Brucella</taxon>
    </lineage>
</organism>
<dbReference type="EC" id="3.6.1.23" evidence="1"/>
<dbReference type="EMBL" id="AM040264">
    <property type="protein sequence ID" value="CAJ11643.1"/>
    <property type="molecule type" value="Genomic_DNA"/>
</dbReference>
<dbReference type="RefSeq" id="WP_002964766.1">
    <property type="nucleotide sequence ID" value="NZ_KN046823.1"/>
</dbReference>
<dbReference type="PDB" id="3MBQ">
    <property type="method" value="X-ray"/>
    <property type="resolution" value="2.10 A"/>
    <property type="chains" value="A/B/C=1-157"/>
</dbReference>
<dbReference type="PDB" id="3MDX">
    <property type="method" value="X-ray"/>
    <property type="resolution" value="1.45 A"/>
    <property type="chains" value="A=1-157"/>
</dbReference>
<dbReference type="PDBsum" id="3MBQ"/>
<dbReference type="PDBsum" id="3MDX"/>
<dbReference type="SMR" id="Q2YRG4"/>
<dbReference type="STRING" id="359391.BAB1_1687"/>
<dbReference type="GeneID" id="97533165"/>
<dbReference type="KEGG" id="bmf:BAB1_1687"/>
<dbReference type="PATRIC" id="fig|359391.11.peg.203"/>
<dbReference type="HOGENOM" id="CLU_068508_1_0_5"/>
<dbReference type="PhylomeDB" id="Q2YRG4"/>
<dbReference type="UniPathway" id="UPA00610">
    <property type="reaction ID" value="UER00666"/>
</dbReference>
<dbReference type="EvolutionaryTrace" id="Q2YRG4"/>
<dbReference type="PRO" id="PR:Q2YRG4"/>
<dbReference type="Proteomes" id="UP000002719">
    <property type="component" value="Chromosome I"/>
</dbReference>
<dbReference type="GO" id="GO:0004170">
    <property type="term" value="F:dUTP diphosphatase activity"/>
    <property type="evidence" value="ECO:0007669"/>
    <property type="project" value="UniProtKB-UniRule"/>
</dbReference>
<dbReference type="GO" id="GO:0000287">
    <property type="term" value="F:magnesium ion binding"/>
    <property type="evidence" value="ECO:0007669"/>
    <property type="project" value="UniProtKB-UniRule"/>
</dbReference>
<dbReference type="GO" id="GO:0006226">
    <property type="term" value="P:dUMP biosynthetic process"/>
    <property type="evidence" value="ECO:0007669"/>
    <property type="project" value="UniProtKB-UniRule"/>
</dbReference>
<dbReference type="GO" id="GO:0046081">
    <property type="term" value="P:dUTP catabolic process"/>
    <property type="evidence" value="ECO:0007669"/>
    <property type="project" value="InterPro"/>
</dbReference>
<dbReference type="CDD" id="cd07557">
    <property type="entry name" value="trimeric_dUTPase"/>
    <property type="match status" value="1"/>
</dbReference>
<dbReference type="Gene3D" id="2.70.40.10">
    <property type="match status" value="1"/>
</dbReference>
<dbReference type="HAMAP" id="MF_00116">
    <property type="entry name" value="dUTPase_bact"/>
    <property type="match status" value="1"/>
</dbReference>
<dbReference type="InterPro" id="IPR008181">
    <property type="entry name" value="dUTPase"/>
</dbReference>
<dbReference type="InterPro" id="IPR029054">
    <property type="entry name" value="dUTPase-like"/>
</dbReference>
<dbReference type="InterPro" id="IPR036157">
    <property type="entry name" value="dUTPase-like_sf"/>
</dbReference>
<dbReference type="InterPro" id="IPR033704">
    <property type="entry name" value="dUTPase_trimeric"/>
</dbReference>
<dbReference type="NCBIfam" id="TIGR00576">
    <property type="entry name" value="dut"/>
    <property type="match status" value="1"/>
</dbReference>
<dbReference type="NCBIfam" id="NF001862">
    <property type="entry name" value="PRK00601.1"/>
    <property type="match status" value="1"/>
</dbReference>
<dbReference type="PANTHER" id="PTHR11241">
    <property type="entry name" value="DEOXYURIDINE 5'-TRIPHOSPHATE NUCLEOTIDOHYDROLASE"/>
    <property type="match status" value="1"/>
</dbReference>
<dbReference type="PANTHER" id="PTHR11241:SF0">
    <property type="entry name" value="DEOXYURIDINE 5'-TRIPHOSPHATE NUCLEOTIDOHYDROLASE"/>
    <property type="match status" value="1"/>
</dbReference>
<dbReference type="Pfam" id="PF00692">
    <property type="entry name" value="dUTPase"/>
    <property type="match status" value="1"/>
</dbReference>
<dbReference type="SUPFAM" id="SSF51283">
    <property type="entry name" value="dUTPase-like"/>
    <property type="match status" value="1"/>
</dbReference>
<keyword id="KW-0002">3D-structure</keyword>
<keyword id="KW-0378">Hydrolase</keyword>
<keyword id="KW-0460">Magnesium</keyword>
<keyword id="KW-0479">Metal-binding</keyword>
<keyword id="KW-0546">Nucleotide metabolism</keyword>
<keyword id="KW-1185">Reference proteome</keyword>
<evidence type="ECO:0000255" key="1">
    <source>
        <dbReference type="HAMAP-Rule" id="MF_00116"/>
    </source>
</evidence>
<evidence type="ECO:0007829" key="2">
    <source>
        <dbReference type="PDB" id="3MBQ"/>
    </source>
</evidence>
<evidence type="ECO:0007829" key="3">
    <source>
        <dbReference type="PDB" id="3MDX"/>
    </source>
</evidence>
<comment type="function">
    <text evidence="1">This enzyme is involved in nucleotide metabolism: it produces dUMP, the immediate precursor of thymidine nucleotides and it decreases the intracellular concentration of dUTP so that uracil cannot be incorporated into DNA.</text>
</comment>
<comment type="catalytic activity">
    <reaction evidence="1">
        <text>dUTP + H2O = dUMP + diphosphate + H(+)</text>
        <dbReference type="Rhea" id="RHEA:10248"/>
        <dbReference type="ChEBI" id="CHEBI:15377"/>
        <dbReference type="ChEBI" id="CHEBI:15378"/>
        <dbReference type="ChEBI" id="CHEBI:33019"/>
        <dbReference type="ChEBI" id="CHEBI:61555"/>
        <dbReference type="ChEBI" id="CHEBI:246422"/>
        <dbReference type="EC" id="3.6.1.23"/>
    </reaction>
</comment>
<comment type="cofactor">
    <cofactor evidence="1">
        <name>Mg(2+)</name>
        <dbReference type="ChEBI" id="CHEBI:18420"/>
    </cofactor>
</comment>
<comment type="pathway">
    <text evidence="1">Pyrimidine metabolism; dUMP biosynthesis; dUMP from dCTP (dUTP route): step 2/2.</text>
</comment>
<comment type="similarity">
    <text evidence="1">Belongs to the dUTPase family.</text>
</comment>
<gene>
    <name evidence="1" type="primary">dut</name>
    <name type="ordered locus">BAB1_1687</name>
</gene>
<reference key="1">
    <citation type="journal article" date="2005" name="Infect. Immun.">
        <title>Whole-genome analyses of speciation events in pathogenic Brucellae.</title>
        <authorList>
            <person name="Chain P.S."/>
            <person name="Comerci D.J."/>
            <person name="Tolmasky M.E."/>
            <person name="Larimer F.W."/>
            <person name="Malfatti S.A."/>
            <person name="Vergez L.M."/>
            <person name="Aguero F."/>
            <person name="Land M.L."/>
            <person name="Ugalde R.A."/>
            <person name="Garcia E."/>
        </authorList>
    </citation>
    <scope>NUCLEOTIDE SEQUENCE [LARGE SCALE GENOMIC DNA]</scope>
    <source>
        <strain>2308</strain>
    </source>
</reference>
<feature type="chain" id="PRO_0000231401" description="Deoxyuridine 5'-triphosphate nucleotidohydrolase">
    <location>
        <begin position="1"/>
        <end position="157"/>
    </location>
</feature>
<feature type="binding site" evidence="1">
    <location>
        <begin position="76"/>
        <end position="78"/>
    </location>
    <ligand>
        <name>substrate</name>
    </ligand>
</feature>
<feature type="binding site" evidence="1">
    <location>
        <position position="89"/>
    </location>
    <ligand>
        <name>substrate</name>
    </ligand>
</feature>
<feature type="binding site" evidence="1">
    <location>
        <begin position="93"/>
        <end position="95"/>
    </location>
    <ligand>
        <name>substrate</name>
    </ligand>
</feature>
<feature type="binding site" evidence="1">
    <location>
        <position position="103"/>
    </location>
    <ligand>
        <name>substrate</name>
    </ligand>
</feature>
<feature type="strand" evidence="3">
    <location>
        <begin position="12"/>
        <end position="15"/>
    </location>
</feature>
<feature type="helix" evidence="3">
    <location>
        <begin position="17"/>
        <end position="19"/>
    </location>
</feature>
<feature type="strand" evidence="3">
    <location>
        <begin position="35"/>
        <end position="38"/>
    </location>
</feature>
<feature type="strand" evidence="3">
    <location>
        <begin position="47"/>
        <end position="49"/>
    </location>
</feature>
<feature type="strand" evidence="3">
    <location>
        <begin position="54"/>
        <end position="64"/>
    </location>
</feature>
<feature type="strand" evidence="3">
    <location>
        <begin position="69"/>
        <end position="74"/>
    </location>
</feature>
<feature type="helix" evidence="3">
    <location>
        <begin position="77"/>
        <end position="83"/>
    </location>
</feature>
<feature type="strand" evidence="3">
    <location>
        <begin position="85"/>
        <end position="87"/>
    </location>
</feature>
<feature type="strand" evidence="3">
    <location>
        <begin position="91"/>
        <end position="94"/>
    </location>
</feature>
<feature type="strand" evidence="3">
    <location>
        <begin position="100"/>
        <end position="108"/>
    </location>
</feature>
<feature type="strand" evidence="3">
    <location>
        <begin position="110"/>
        <end position="112"/>
    </location>
</feature>
<feature type="strand" evidence="3">
    <location>
        <begin position="114"/>
        <end position="116"/>
    </location>
</feature>
<feature type="strand" evidence="3">
    <location>
        <begin position="121"/>
        <end position="129"/>
    </location>
</feature>
<feature type="strand" evidence="2">
    <location>
        <begin position="134"/>
        <end position="137"/>
    </location>
</feature>
<name>DUT_BRUA2</name>